<gene>
    <name type="ordered locus">APJL_1638</name>
</gene>
<dbReference type="EMBL" id="CP000687">
    <property type="protein sequence ID" value="ABY70190.1"/>
    <property type="molecule type" value="Genomic_DNA"/>
</dbReference>
<dbReference type="RefSeq" id="WP_012263311.1">
    <property type="nucleotide sequence ID" value="NC_010278.1"/>
</dbReference>
<dbReference type="SMR" id="B0BRT1"/>
<dbReference type="KEGG" id="apj:APJL_1638"/>
<dbReference type="HOGENOM" id="CLU_051840_0_0_6"/>
<dbReference type="Proteomes" id="UP000008547">
    <property type="component" value="Chromosome"/>
</dbReference>
<dbReference type="GO" id="GO:0080146">
    <property type="term" value="F:L-cysteine desulfhydrase activity"/>
    <property type="evidence" value="ECO:0007669"/>
    <property type="project" value="TreeGrafter"/>
</dbReference>
<dbReference type="GO" id="GO:0019450">
    <property type="term" value="P:L-cysteine catabolic process to pyruvate"/>
    <property type="evidence" value="ECO:0007669"/>
    <property type="project" value="TreeGrafter"/>
</dbReference>
<dbReference type="HAMAP" id="MF_01845">
    <property type="entry name" value="UPF0597"/>
    <property type="match status" value="1"/>
</dbReference>
<dbReference type="InterPro" id="IPR005130">
    <property type="entry name" value="Ser_deHydtase-like_asu"/>
</dbReference>
<dbReference type="InterPro" id="IPR021144">
    <property type="entry name" value="UPF0597"/>
</dbReference>
<dbReference type="PANTHER" id="PTHR30501">
    <property type="entry name" value="UPF0597 PROTEIN YHAM"/>
    <property type="match status" value="1"/>
</dbReference>
<dbReference type="PANTHER" id="PTHR30501:SF2">
    <property type="entry name" value="UPF0597 PROTEIN YHAM"/>
    <property type="match status" value="1"/>
</dbReference>
<dbReference type="Pfam" id="PF03313">
    <property type="entry name" value="SDH_alpha"/>
    <property type="match status" value="1"/>
</dbReference>
<dbReference type="PIRSF" id="PIRSF006054">
    <property type="entry name" value="UCP006054"/>
    <property type="match status" value="1"/>
</dbReference>
<sequence>MKFKSELEQAIIATVQQEVVPALGCTEPVSLALAAAVARQYLGALPDRIEAKVSPNLMKNGMGVTVPGTGTVGLTMAAAIGAIGGDPNGGLEVLKHITNEQVAQAKQMIHDHKIEVSISDTEHILYSEATLFNADQQVKVRIAAHHTNVIYIEKNGELLFSKPCVVESENAENVFANLNAKDIYDFSLNVELEKIRFIQQAAILNSALSQEGLNQDYGLHIGRTLQKQIGKGLISDDLLNRIVIETTAASDARMGGANLPAMSNSGSGNQGITATMPVVVVARHLVASEEQLIRALFLSHLMAIYIHSKLPKLSALCAVTTAAMGSCAGVAWLLTGKFEAISMAISSMIGDISGIICDGAANSCAMKVSTSVSSSYKSILMALDDTQVTGNEGIVEHQIDRSINNLCAIASRSMQYTDRQVIEIMVSKPKSL</sequence>
<name>Y1638_ACTPJ</name>
<protein>
    <recommendedName>
        <fullName evidence="1">UPF0597 protein APJL_1638</fullName>
    </recommendedName>
</protein>
<feature type="chain" id="PRO_0000339778" description="UPF0597 protein APJL_1638">
    <location>
        <begin position="1"/>
        <end position="432"/>
    </location>
</feature>
<comment type="similarity">
    <text evidence="1">Belongs to the UPF0597 family.</text>
</comment>
<reference key="1">
    <citation type="journal article" date="2008" name="PLoS ONE">
        <title>Genome biology of Actinobacillus pleuropneumoniae JL03, an isolate of serotype 3 prevalent in China.</title>
        <authorList>
            <person name="Xu Z."/>
            <person name="Zhou Y."/>
            <person name="Li L."/>
            <person name="Zhou R."/>
            <person name="Xiao S."/>
            <person name="Wan Y."/>
            <person name="Zhang S."/>
            <person name="Wang K."/>
            <person name="Li W."/>
            <person name="Li L."/>
            <person name="Jin H."/>
            <person name="Kang M."/>
            <person name="Dalai B."/>
            <person name="Li T."/>
            <person name="Liu L."/>
            <person name="Cheng Y."/>
            <person name="Zhang L."/>
            <person name="Xu T."/>
            <person name="Zheng H."/>
            <person name="Pu S."/>
            <person name="Wang B."/>
            <person name="Gu W."/>
            <person name="Zhang X.L."/>
            <person name="Zhu G.-F."/>
            <person name="Wang S."/>
            <person name="Zhao G.-P."/>
            <person name="Chen H."/>
        </authorList>
    </citation>
    <scope>NUCLEOTIDE SEQUENCE [LARGE SCALE GENOMIC DNA]</scope>
    <source>
        <strain>JL03</strain>
    </source>
</reference>
<proteinExistence type="inferred from homology"/>
<evidence type="ECO:0000255" key="1">
    <source>
        <dbReference type="HAMAP-Rule" id="MF_01845"/>
    </source>
</evidence>
<accession>B0BRT1</accession>
<organism>
    <name type="scientific">Actinobacillus pleuropneumoniae serotype 3 (strain JL03)</name>
    <dbReference type="NCBI Taxonomy" id="434271"/>
    <lineage>
        <taxon>Bacteria</taxon>
        <taxon>Pseudomonadati</taxon>
        <taxon>Pseudomonadota</taxon>
        <taxon>Gammaproteobacteria</taxon>
        <taxon>Pasteurellales</taxon>
        <taxon>Pasteurellaceae</taxon>
        <taxon>Actinobacillus</taxon>
    </lineage>
</organism>